<sequence length="309" mass="36195">MPLQLFGRDQIVVHYDNGNMSNDDQNHQSVLGSWTRRAAAALRTLMNKRIQRITLTHWLLLVIWVTSLWKFTSHYRQLYANSAVFATLCTNILLFGISDILAQSIACFYSYHVDPIPQILNDTFHHVQNNRDVENGGGYESDELSIFNDFTSEHSSYTDNDDYPELDRPLATFKTDTFDFFRWGCFMFWGFFISFFQAPWYKFLNFFYTEDPTVVQVFERVLSDQLLYSPISLYCFFMFSNYVMEGGDKDTLGKKIQRLYISTLGCNYLVWPMVQFINFLIMPRDFQAPFSSSVGVVWNCFLSMRNASK</sequence>
<protein>
    <recommendedName>
        <fullName>Vacuolar membrane protein YOR292C</fullName>
    </recommendedName>
</protein>
<name>YO292_YEAST</name>
<proteinExistence type="evidence at protein level"/>
<organism>
    <name type="scientific">Saccharomyces cerevisiae (strain ATCC 204508 / S288c)</name>
    <name type="common">Baker's yeast</name>
    <dbReference type="NCBI Taxonomy" id="559292"/>
    <lineage>
        <taxon>Eukaryota</taxon>
        <taxon>Fungi</taxon>
        <taxon>Dikarya</taxon>
        <taxon>Ascomycota</taxon>
        <taxon>Saccharomycotina</taxon>
        <taxon>Saccharomycetes</taxon>
        <taxon>Saccharomycetales</taxon>
        <taxon>Saccharomycetaceae</taxon>
        <taxon>Saccharomyces</taxon>
    </lineage>
</organism>
<keyword id="KW-0325">Glycoprotein</keyword>
<keyword id="KW-0472">Membrane</keyword>
<keyword id="KW-1185">Reference proteome</keyword>
<keyword id="KW-0812">Transmembrane</keyword>
<keyword id="KW-1133">Transmembrane helix</keyword>
<keyword id="KW-0926">Vacuole</keyword>
<dbReference type="EMBL" id="Z75200">
    <property type="protein sequence ID" value="CAA99520.1"/>
    <property type="molecule type" value="Genomic_DNA"/>
</dbReference>
<dbReference type="EMBL" id="BK006948">
    <property type="protein sequence ID" value="DAA11056.1"/>
    <property type="molecule type" value="Genomic_DNA"/>
</dbReference>
<dbReference type="PIR" id="S67196">
    <property type="entry name" value="S67196"/>
</dbReference>
<dbReference type="RefSeq" id="NP_014935.3">
    <property type="nucleotide sequence ID" value="NM_001183711.3"/>
</dbReference>
<dbReference type="BioGRID" id="34680">
    <property type="interactions" value="78"/>
</dbReference>
<dbReference type="DIP" id="DIP-1733N"/>
<dbReference type="FunCoup" id="Q08743">
    <property type="interactions" value="53"/>
</dbReference>
<dbReference type="IntAct" id="Q08743">
    <property type="interactions" value="3"/>
</dbReference>
<dbReference type="MINT" id="Q08743"/>
<dbReference type="STRING" id="4932.YOR292C"/>
<dbReference type="GlyGen" id="Q08743">
    <property type="glycosylation" value="2 sites"/>
</dbReference>
<dbReference type="iPTMnet" id="Q08743"/>
<dbReference type="PaxDb" id="4932-YOR292C"/>
<dbReference type="PeptideAtlas" id="Q08743"/>
<dbReference type="EnsemblFungi" id="YOR292C_mRNA">
    <property type="protein sequence ID" value="YOR292C"/>
    <property type="gene ID" value="YOR292C"/>
</dbReference>
<dbReference type="GeneID" id="854467"/>
<dbReference type="KEGG" id="sce:YOR292C"/>
<dbReference type="AGR" id="SGD:S000005818"/>
<dbReference type="SGD" id="S000005818">
    <property type="gene designation" value="YOR292C"/>
</dbReference>
<dbReference type="VEuPathDB" id="FungiDB:YOR292C"/>
<dbReference type="eggNOG" id="KOG1944">
    <property type="taxonomic scope" value="Eukaryota"/>
</dbReference>
<dbReference type="HOGENOM" id="CLU_049109_8_0_1"/>
<dbReference type="InParanoid" id="Q08743"/>
<dbReference type="OMA" id="FRVMPIQ"/>
<dbReference type="OrthoDB" id="10267969at2759"/>
<dbReference type="BioCyc" id="YEAST:G3O-33777-MONOMER"/>
<dbReference type="BioGRID-ORCS" id="854467">
    <property type="hits" value="0 hits in 10 CRISPR screens"/>
</dbReference>
<dbReference type="PRO" id="PR:Q08743"/>
<dbReference type="Proteomes" id="UP000002311">
    <property type="component" value="Chromosome XV"/>
</dbReference>
<dbReference type="RNAct" id="Q08743">
    <property type="molecule type" value="protein"/>
</dbReference>
<dbReference type="GO" id="GO:0005737">
    <property type="term" value="C:cytoplasm"/>
    <property type="evidence" value="ECO:0000318"/>
    <property type="project" value="GO_Central"/>
</dbReference>
<dbReference type="GO" id="GO:0000324">
    <property type="term" value="C:fungal-type vacuole"/>
    <property type="evidence" value="ECO:0007005"/>
    <property type="project" value="SGD"/>
</dbReference>
<dbReference type="GO" id="GO:0005739">
    <property type="term" value="C:mitochondrion"/>
    <property type="evidence" value="ECO:0000318"/>
    <property type="project" value="GO_Central"/>
</dbReference>
<dbReference type="GO" id="GO:0005774">
    <property type="term" value="C:vacuolar membrane"/>
    <property type="evidence" value="ECO:0007669"/>
    <property type="project" value="UniProtKB-SubCell"/>
</dbReference>
<dbReference type="InterPro" id="IPR007248">
    <property type="entry name" value="Mpv17_PMP22"/>
</dbReference>
<dbReference type="PANTHER" id="PTHR11266">
    <property type="entry name" value="PEROXISOMAL MEMBRANE PROTEIN 2, PXMP2 MPV17"/>
    <property type="match status" value="1"/>
</dbReference>
<dbReference type="PANTHER" id="PTHR11266:SF50">
    <property type="entry name" value="VACUOLAR MEMBRANE PROTEIN YOR292C"/>
    <property type="match status" value="1"/>
</dbReference>
<dbReference type="Pfam" id="PF04117">
    <property type="entry name" value="Mpv17_PMP22"/>
    <property type="match status" value="1"/>
</dbReference>
<evidence type="ECO:0000255" key="1"/>
<evidence type="ECO:0000269" key="2">
    <source>
    </source>
</evidence>
<evidence type="ECO:0000269" key="3">
    <source>
    </source>
</evidence>
<evidence type="ECO:0000305" key="4"/>
<accession>Q08743</accession>
<accession>D6W2Z0</accession>
<gene>
    <name type="ordered locus">YOR292C</name>
</gene>
<feature type="chain" id="PRO_0000245252" description="Vacuolar membrane protein YOR292C">
    <location>
        <begin position="1"/>
        <end position="309"/>
    </location>
</feature>
<feature type="topological domain" description="Vacuolar" evidence="1">
    <location>
        <begin position="1"/>
        <end position="52"/>
    </location>
</feature>
<feature type="transmembrane region" description="Helical" evidence="1">
    <location>
        <begin position="53"/>
        <end position="73"/>
    </location>
</feature>
<feature type="topological domain" description="Cytoplasmic" evidence="1">
    <location>
        <begin position="74"/>
        <end position="81"/>
    </location>
</feature>
<feature type="transmembrane region" description="Helical" evidence="1">
    <location>
        <begin position="82"/>
        <end position="102"/>
    </location>
</feature>
<feature type="topological domain" description="Vacuolar" evidence="1">
    <location>
        <begin position="103"/>
        <end position="183"/>
    </location>
</feature>
<feature type="transmembrane region" description="Helical" evidence="1">
    <location>
        <begin position="184"/>
        <end position="204"/>
    </location>
</feature>
<feature type="topological domain" description="Cytoplasmic" evidence="1">
    <location>
        <begin position="205"/>
        <end position="225"/>
    </location>
</feature>
<feature type="transmembrane region" description="Helical" evidence="1">
    <location>
        <begin position="226"/>
        <end position="246"/>
    </location>
</feature>
<feature type="topological domain" description="Vacuolar" evidence="1">
    <location>
        <begin position="247"/>
        <end position="260"/>
    </location>
</feature>
<feature type="transmembrane region" description="Helical" evidence="1">
    <location>
        <begin position="261"/>
        <end position="281"/>
    </location>
</feature>
<feature type="topological domain" description="Cytoplasmic" evidence="1">
    <location>
        <begin position="282"/>
        <end position="309"/>
    </location>
</feature>
<feature type="glycosylation site" description="N-linked (GlcNAc...) asparagine" evidence="1">
    <location>
        <position position="19"/>
    </location>
</feature>
<feature type="glycosylation site" description="N-linked (GlcNAc...) asparagine" evidence="1">
    <location>
        <position position="121"/>
    </location>
</feature>
<comment type="subcellular location">
    <subcellularLocation>
        <location evidence="2">Vacuole membrane</location>
        <topology evidence="2">Multi-pass membrane protein</topology>
    </subcellularLocation>
</comment>
<comment type="PTM">
    <text evidence="3">N-glycosylated.</text>
</comment>
<comment type="similarity">
    <text evidence="4">Belongs to the peroxisomal membrane protein PXMP2/4 family.</text>
</comment>
<reference key="1">
    <citation type="journal article" date="1997" name="Yeast">
        <title>Sequence and analysis of a 36.2 kb fragment from the right arm of yeast chromosome XV reveals 19 open reading frames including SNF2 (5' end), CPA1, SLY41, a putative transport ATPase, a putative ribosomal protein and an SNF2 homologue.</title>
        <authorList>
            <person name="Poirey R."/>
            <person name="Cziepluch C."/>
            <person name="Tobiasch E."/>
            <person name="Pujol A."/>
            <person name="Kordes E."/>
            <person name="Jauniaux J.-C."/>
        </authorList>
    </citation>
    <scope>NUCLEOTIDE SEQUENCE [GENOMIC DNA]</scope>
</reference>
<reference key="2">
    <citation type="journal article" date="1997" name="Nature">
        <title>The nucleotide sequence of Saccharomyces cerevisiae chromosome XV.</title>
        <authorList>
            <person name="Dujon B."/>
            <person name="Albermann K."/>
            <person name="Aldea M."/>
            <person name="Alexandraki D."/>
            <person name="Ansorge W."/>
            <person name="Arino J."/>
            <person name="Benes V."/>
            <person name="Bohn C."/>
            <person name="Bolotin-Fukuhara M."/>
            <person name="Bordonne R."/>
            <person name="Boyer J."/>
            <person name="Camasses A."/>
            <person name="Casamayor A."/>
            <person name="Casas C."/>
            <person name="Cheret G."/>
            <person name="Cziepluch C."/>
            <person name="Daignan-Fornier B."/>
            <person name="Dang V.-D."/>
            <person name="de Haan M."/>
            <person name="Delius H."/>
            <person name="Durand P."/>
            <person name="Fairhead C."/>
            <person name="Feldmann H."/>
            <person name="Gaillon L."/>
            <person name="Galisson F."/>
            <person name="Gamo F.-J."/>
            <person name="Gancedo C."/>
            <person name="Goffeau A."/>
            <person name="Goulding S.E."/>
            <person name="Grivell L.A."/>
            <person name="Habbig B."/>
            <person name="Hand N.J."/>
            <person name="Hani J."/>
            <person name="Hattenhorst U."/>
            <person name="Hebling U."/>
            <person name="Hernando Y."/>
            <person name="Herrero E."/>
            <person name="Heumann K."/>
            <person name="Hiesel R."/>
            <person name="Hilger F."/>
            <person name="Hofmann B."/>
            <person name="Hollenberg C.P."/>
            <person name="Hughes B."/>
            <person name="Jauniaux J.-C."/>
            <person name="Kalogeropoulos A."/>
            <person name="Katsoulou C."/>
            <person name="Kordes E."/>
            <person name="Lafuente M.J."/>
            <person name="Landt O."/>
            <person name="Louis E.J."/>
            <person name="Maarse A.C."/>
            <person name="Madania A."/>
            <person name="Mannhaupt G."/>
            <person name="Marck C."/>
            <person name="Martin R.P."/>
            <person name="Mewes H.-W."/>
            <person name="Michaux G."/>
            <person name="Paces V."/>
            <person name="Parle-McDermott A.G."/>
            <person name="Pearson B.M."/>
            <person name="Perrin A."/>
            <person name="Pettersson B."/>
            <person name="Poch O."/>
            <person name="Pohl T.M."/>
            <person name="Poirey R."/>
            <person name="Portetelle D."/>
            <person name="Pujol A."/>
            <person name="Purnelle B."/>
            <person name="Ramezani Rad M."/>
            <person name="Rechmann S."/>
            <person name="Schwager C."/>
            <person name="Schweizer M."/>
            <person name="Sor F."/>
            <person name="Sterky F."/>
            <person name="Tarassov I.A."/>
            <person name="Teodoru C."/>
            <person name="Tettelin H."/>
            <person name="Thierry A."/>
            <person name="Tobiasch E."/>
            <person name="Tzermia M."/>
            <person name="Uhlen M."/>
            <person name="Unseld M."/>
            <person name="Valens M."/>
            <person name="Vandenbol M."/>
            <person name="Vetter I."/>
            <person name="Vlcek C."/>
            <person name="Voet M."/>
            <person name="Volckaert G."/>
            <person name="Voss H."/>
            <person name="Wambutt R."/>
            <person name="Wedler H."/>
            <person name="Wiemann S."/>
            <person name="Winsor B."/>
            <person name="Wolfe K.H."/>
            <person name="Zollner A."/>
            <person name="Zumstein E."/>
            <person name="Kleine K."/>
        </authorList>
    </citation>
    <scope>NUCLEOTIDE SEQUENCE [LARGE SCALE GENOMIC DNA]</scope>
    <source>
        <strain>ATCC 204508 / S288c</strain>
    </source>
</reference>
<reference key="3">
    <citation type="journal article" date="2014" name="G3 (Bethesda)">
        <title>The reference genome sequence of Saccharomyces cerevisiae: Then and now.</title>
        <authorList>
            <person name="Engel S.R."/>
            <person name="Dietrich F.S."/>
            <person name="Fisk D.G."/>
            <person name="Binkley G."/>
            <person name="Balakrishnan R."/>
            <person name="Costanzo M.C."/>
            <person name="Dwight S.S."/>
            <person name="Hitz B.C."/>
            <person name="Karra K."/>
            <person name="Nash R.S."/>
            <person name="Weng S."/>
            <person name="Wong E.D."/>
            <person name="Lloyd P."/>
            <person name="Skrzypek M.S."/>
            <person name="Miyasato S.R."/>
            <person name="Simison M."/>
            <person name="Cherry J.M."/>
        </authorList>
    </citation>
    <scope>GENOME REANNOTATION</scope>
    <source>
        <strain>ATCC 204508 / S288c</strain>
    </source>
</reference>
<reference key="4">
    <citation type="journal article" date="2003" name="Nature">
        <title>Global analysis of protein localization in budding yeast.</title>
        <authorList>
            <person name="Huh W.-K."/>
            <person name="Falvo J.V."/>
            <person name="Gerke L.C."/>
            <person name="Carroll A.S."/>
            <person name="Howson R.W."/>
            <person name="Weissman J.S."/>
            <person name="O'Shea E.K."/>
        </authorList>
    </citation>
    <scope>SUBCELLULAR LOCATION [LARGE SCALE ANALYSIS]</scope>
</reference>
<reference key="5">
    <citation type="journal article" date="2006" name="Proc. Natl. Acad. Sci. U.S.A.">
        <title>A global topology map of the Saccharomyces cerevisiae membrane proteome.</title>
        <authorList>
            <person name="Kim H."/>
            <person name="Melen K."/>
            <person name="Oesterberg M."/>
            <person name="von Heijne G."/>
        </authorList>
    </citation>
    <scope>TOPOLOGY [LARGE SCALE ANALYSIS]</scope>
    <source>
        <strain>ATCC 208353 / W303-1A</strain>
    </source>
</reference>
<reference key="6">
    <citation type="journal article" date="2009" name="Mol. Syst. Biol.">
        <title>Global analysis of the glycoproteome in Saccharomyces cerevisiae reveals new roles for protein glycosylation in eukaryotes.</title>
        <authorList>
            <person name="Kung L.A."/>
            <person name="Tao S.-C."/>
            <person name="Qian J."/>
            <person name="Smith M.G."/>
            <person name="Snyder M."/>
            <person name="Zhu H."/>
        </authorList>
    </citation>
    <scope>GLYCOSYLATION [LARGE SCALE ANALYSIS]</scope>
</reference>